<keyword id="KW-0472">Membrane</keyword>
<keyword id="KW-0496">Mitochondrion</keyword>
<keyword id="KW-0999">Mitochondrion inner membrane</keyword>
<keyword id="KW-0677">Repeat</keyword>
<keyword id="KW-1278">Translocase</keyword>
<keyword id="KW-0812">Transmembrane</keyword>
<keyword id="KW-1133">Transmembrane helix</keyword>
<keyword id="KW-0813">Transport</keyword>
<proteinExistence type="inferred from homology"/>
<evidence type="ECO:0000255" key="1"/>
<evidence type="ECO:0000255" key="2">
    <source>
        <dbReference type="PROSITE-ProRule" id="PRU00282"/>
    </source>
</evidence>
<evidence type="ECO:0000269" key="3">
    <source>
    </source>
</evidence>
<evidence type="ECO:0000303" key="4">
    <source>
    </source>
</evidence>
<evidence type="ECO:0000305" key="5"/>
<evidence type="ECO:0000305" key="6">
    <source>
    </source>
</evidence>
<sequence>MASGAKLEASHPPKAANAAAPAKKVHYPFWFGGSASCFAAAVTHPLDLVKVRLQTRGPGAPSTMVGTFVHVFKNDGFFGLYSGLSAAILRQLTYSTTRFGIYEELKNHFTSPDSPPGLFTLIGMASASGFIGGMAGNPADVLNVRMQSDAALPPAQRRNYRNAIHGLVTMTRTEGPASLFRGVWPNSTRAVLMTTSQLASYDTFKRLCLENLGMSDNMGTHFTASFMAGFVATTVCSPVDVIKTRVMTASPAEGRSQSIVGLLRDITRKEGLAWAFRGWVPSFIRLGPHTIATFIFLEEHKKLYRLLKGL</sequence>
<protein>
    <recommendedName>
        <fullName evidence="4">Mitochondrial citrate transporter F</fullName>
        <ecNumber evidence="6">7.-.-.-</ecNumber>
    </recommendedName>
</protein>
<dbReference type="EC" id="7.-.-.-" evidence="6"/>
<dbReference type="EMBL" id="ACJE01000010">
    <property type="protein sequence ID" value="EHA22671.1"/>
    <property type="molecule type" value="Genomic_DNA"/>
</dbReference>
<dbReference type="SMR" id="G3Y1Q5"/>
<dbReference type="STRING" id="380704.G3Y1Q5"/>
<dbReference type="HOGENOM" id="CLU_015166_14_1_1"/>
<dbReference type="OrthoDB" id="53494at5052"/>
<dbReference type="Proteomes" id="UP000009038">
    <property type="component" value="Unassembled WGS sequence"/>
</dbReference>
<dbReference type="GO" id="GO:0005743">
    <property type="term" value="C:mitochondrial inner membrane"/>
    <property type="evidence" value="ECO:0007669"/>
    <property type="project" value="UniProtKB-SubCell"/>
</dbReference>
<dbReference type="GO" id="GO:0055085">
    <property type="term" value="P:transmembrane transport"/>
    <property type="evidence" value="ECO:0007669"/>
    <property type="project" value="InterPro"/>
</dbReference>
<dbReference type="FunFam" id="1.50.40.10:FF:000107">
    <property type="entry name" value="Mitochondrial dicarboxylate carrier"/>
    <property type="match status" value="1"/>
</dbReference>
<dbReference type="Gene3D" id="1.50.40.10">
    <property type="entry name" value="Mitochondrial carrier domain"/>
    <property type="match status" value="1"/>
</dbReference>
<dbReference type="InterPro" id="IPR002067">
    <property type="entry name" value="Mit_carrier"/>
</dbReference>
<dbReference type="InterPro" id="IPR050391">
    <property type="entry name" value="Mito_Metabolite_Transporter"/>
</dbReference>
<dbReference type="InterPro" id="IPR018108">
    <property type="entry name" value="Mitochondrial_sb/sol_carrier"/>
</dbReference>
<dbReference type="InterPro" id="IPR023395">
    <property type="entry name" value="Mt_carrier_dom_sf"/>
</dbReference>
<dbReference type="PANTHER" id="PTHR45618">
    <property type="entry name" value="MITOCHONDRIAL DICARBOXYLATE CARRIER-RELATED"/>
    <property type="match status" value="1"/>
</dbReference>
<dbReference type="Pfam" id="PF00153">
    <property type="entry name" value="Mito_carr"/>
    <property type="match status" value="3"/>
</dbReference>
<dbReference type="PRINTS" id="PR00784">
    <property type="entry name" value="MTUNCOUPLING"/>
</dbReference>
<dbReference type="SUPFAM" id="SSF103506">
    <property type="entry name" value="Mitochondrial carrier"/>
    <property type="match status" value="1"/>
</dbReference>
<dbReference type="PROSITE" id="PS50920">
    <property type="entry name" value="SOLCAR"/>
    <property type="match status" value="3"/>
</dbReference>
<comment type="function">
    <text evidence="3">Mitochondrial transporter that does not mediate citrate export from mitochondria to cytoplasm (PubMed:36177470). Its exact function has still to be determined (PubMed:36177470).</text>
</comment>
<comment type="subcellular location">
    <subcellularLocation>
        <location evidence="6">Mitochondrion inner membrane</location>
        <topology evidence="1">Multi-pass membrane protein</topology>
    </subcellularLocation>
</comment>
<comment type="disruption phenotype">
    <text evidence="3">Leads to fluffy and albino colonies, and reduced conidia formation, when all 6 genes ctpA to ctpF are deleted.</text>
</comment>
<comment type="similarity">
    <text evidence="5">Belongs to the mitochondrial carrier (TC 2.A.29) family.</text>
</comment>
<accession>G3Y1Q5</accession>
<name>CTPF_ASPNA</name>
<reference key="1">
    <citation type="journal article" date="2011" name="Genome Res.">
        <title>Comparative genomics of citric-acid-producing Aspergillus niger ATCC 1015 versus enzyme-producing CBS 513.88.</title>
        <authorList>
            <person name="Andersen M.R."/>
            <person name="Salazar M.P."/>
            <person name="Schaap P.J."/>
            <person name="van de Vondervoort P.J.I."/>
            <person name="Culley D."/>
            <person name="Thykaer J."/>
            <person name="Frisvad J.C."/>
            <person name="Nielsen K.F."/>
            <person name="Albang R."/>
            <person name="Albermann K."/>
            <person name="Berka R.M."/>
            <person name="Braus G.H."/>
            <person name="Braus-Stromeyer S.A."/>
            <person name="Corrochano L.M."/>
            <person name="Dai Z."/>
            <person name="van Dijck P.W.M."/>
            <person name="Hofmann G."/>
            <person name="Lasure L.L."/>
            <person name="Magnuson J.K."/>
            <person name="Menke H."/>
            <person name="Meijer M."/>
            <person name="Meijer S.L."/>
            <person name="Nielsen J.B."/>
            <person name="Nielsen M.L."/>
            <person name="van Ooyen A.J.J."/>
            <person name="Pel H.J."/>
            <person name="Poulsen L."/>
            <person name="Samson R.A."/>
            <person name="Stam H."/>
            <person name="Tsang A."/>
            <person name="van den Brink J.M."/>
            <person name="Atkins A."/>
            <person name="Aerts A."/>
            <person name="Shapiro H."/>
            <person name="Pangilinan J."/>
            <person name="Salamov A."/>
            <person name="Lou Y."/>
            <person name="Lindquist E."/>
            <person name="Lucas S."/>
            <person name="Grimwood J."/>
            <person name="Grigoriev I.V."/>
            <person name="Kubicek C.P."/>
            <person name="Martinez D."/>
            <person name="van Peij N.N.M.E."/>
            <person name="Roubos J.A."/>
            <person name="Nielsen J."/>
            <person name="Baker S.E."/>
        </authorList>
    </citation>
    <scope>NUCLEOTIDE SEQUENCE [LARGE SCALE GENOMIC DNA]</scope>
    <source>
        <strain>ATCC 1015 / CBS 113.46 / FGSC A1144 / LSHB Ac4 / NCTC 3858a / NRRL 328 / USDA 3528.7</strain>
    </source>
</reference>
<reference key="2">
    <citation type="journal article" date="2022" name="Front. Microbiol.">
        <title>Identification and genetic characterization of mitochondrial citrate transporters in Aspergillus niger.</title>
        <authorList>
            <person name="Cao W."/>
            <person name="Zhang L."/>
            <person name="Wu L."/>
            <person name="Zhang M."/>
            <person name="Liu J."/>
            <person name="Xie Z."/>
            <person name="Liu H."/>
        </authorList>
    </citation>
    <scope>FUNCTION</scope>
    <scope>DISRUPTION PHENOTYPE</scope>
</reference>
<gene>
    <name evidence="4" type="primary">ctpF</name>
    <name type="ORF">ASPNIDRAFT_174907</name>
</gene>
<organism>
    <name type="scientific">Aspergillus niger (strain ATCC 1015 / CBS 113.46 / FGSC A1144 / LSHB Ac4 / NCTC 3858a / NRRL 328 / USDA 3528.7)</name>
    <dbReference type="NCBI Taxonomy" id="380704"/>
    <lineage>
        <taxon>Eukaryota</taxon>
        <taxon>Fungi</taxon>
        <taxon>Dikarya</taxon>
        <taxon>Ascomycota</taxon>
        <taxon>Pezizomycotina</taxon>
        <taxon>Eurotiomycetes</taxon>
        <taxon>Eurotiomycetidae</taxon>
        <taxon>Eurotiales</taxon>
        <taxon>Aspergillaceae</taxon>
        <taxon>Aspergillus</taxon>
        <taxon>Aspergillus subgen. Circumdati</taxon>
    </lineage>
</organism>
<feature type="chain" id="PRO_0000457333" description="Mitochondrial citrate transporter F">
    <location>
        <begin position="1"/>
        <end position="310"/>
    </location>
</feature>
<feature type="transmembrane region" description="Helical; Name=1" evidence="1">
    <location>
        <begin position="29"/>
        <end position="49"/>
    </location>
</feature>
<feature type="transmembrane region" description="Helical; Name=2" evidence="1">
    <location>
        <begin position="85"/>
        <end position="105"/>
    </location>
</feature>
<feature type="transmembrane region" description="Helical; Name=3" evidence="1">
    <location>
        <begin position="122"/>
        <end position="142"/>
    </location>
</feature>
<feature type="transmembrane region" description="Helical; Name=4" evidence="1">
    <location>
        <begin position="186"/>
        <end position="206"/>
    </location>
</feature>
<feature type="transmembrane region" description="Helical; Name=5" evidence="1">
    <location>
        <begin position="222"/>
        <end position="242"/>
    </location>
</feature>
<feature type="transmembrane region" description="Helical; Name=6" evidence="1">
    <location>
        <begin position="275"/>
        <end position="296"/>
    </location>
</feature>
<feature type="repeat" description="Solcar 1" evidence="2">
    <location>
        <begin position="23"/>
        <end position="108"/>
    </location>
</feature>
<feature type="repeat" description="Solcar 2" evidence="2">
    <location>
        <begin position="115"/>
        <end position="207"/>
    </location>
</feature>
<feature type="repeat" description="Solcar 3" evidence="2">
    <location>
        <begin position="216"/>
        <end position="303"/>
    </location>
</feature>